<feature type="chain" id="PRO_0000211600" description="Chromosome partition protein MukF">
    <location>
        <begin position="1"/>
        <end position="440"/>
    </location>
</feature>
<feature type="region of interest" description="Leucine-zipper">
    <location>
        <begin position="208"/>
        <end position="236"/>
    </location>
</feature>
<feature type="mutagenesis site" description="Abolishes function." evidence="3">
    <original>L</original>
    <variation>P</variation>
    <location>
        <position position="233"/>
    </location>
</feature>
<feature type="helix" evidence="5">
    <location>
        <begin position="10"/>
        <end position="18"/>
    </location>
</feature>
<feature type="strand" evidence="5">
    <location>
        <begin position="22"/>
        <end position="24"/>
    </location>
</feature>
<feature type="helix" evidence="5">
    <location>
        <begin position="26"/>
        <end position="40"/>
    </location>
</feature>
<feature type="helix" evidence="5">
    <location>
        <begin position="49"/>
        <end position="62"/>
    </location>
</feature>
<feature type="helix" evidence="5">
    <location>
        <begin position="70"/>
        <end position="83"/>
    </location>
</feature>
<feature type="strand" evidence="5">
    <location>
        <begin position="86"/>
        <end position="89"/>
    </location>
</feature>
<feature type="strand" evidence="5">
    <location>
        <begin position="101"/>
        <end position="103"/>
    </location>
</feature>
<feature type="helix" evidence="5">
    <location>
        <begin position="105"/>
        <end position="115"/>
    </location>
</feature>
<feature type="helix" evidence="5">
    <location>
        <begin position="122"/>
        <end position="144"/>
    </location>
</feature>
<feature type="helix" evidence="5">
    <location>
        <begin position="149"/>
        <end position="155"/>
    </location>
</feature>
<feature type="helix" evidence="5">
    <location>
        <begin position="157"/>
        <end position="162"/>
    </location>
</feature>
<feature type="helix" evidence="5">
    <location>
        <begin position="164"/>
        <end position="195"/>
    </location>
</feature>
<feature type="helix" evidence="5">
    <location>
        <begin position="197"/>
        <end position="241"/>
    </location>
</feature>
<feature type="strand" evidence="5">
    <location>
        <begin position="242"/>
        <end position="245"/>
    </location>
</feature>
<feature type="helix" evidence="5">
    <location>
        <begin position="247"/>
        <end position="279"/>
    </location>
</feature>
<feature type="turn" evidence="6">
    <location>
        <begin position="288"/>
        <end position="291"/>
    </location>
</feature>
<feature type="helix" evidence="6">
    <location>
        <begin position="297"/>
        <end position="306"/>
    </location>
</feature>
<feature type="helix" evidence="6">
    <location>
        <begin position="308"/>
        <end position="310"/>
    </location>
</feature>
<feature type="strand" evidence="6">
    <location>
        <begin position="313"/>
        <end position="318"/>
    </location>
</feature>
<feature type="strand" evidence="6">
    <location>
        <begin position="323"/>
        <end position="325"/>
    </location>
</feature>
<reference key="1">
    <citation type="journal article" date="1994" name="Mol. Gen. Genet.">
        <title>New killing system controlled by two genes located immediately upstream of the mukB gene in Escherichia coli.</title>
        <authorList>
            <person name="Feng J."/>
            <person name="Yamanaka K."/>
            <person name="Niki H."/>
            <person name="Ogura T."/>
            <person name="Hiraga S."/>
        </authorList>
    </citation>
    <scope>NUCLEOTIDE SEQUENCE [GENOMIC DNA]</scope>
    <source>
        <strain>K12 / W3110 / ATCC 27325 / DSM 5911</strain>
    </source>
</reference>
<reference key="2">
    <citation type="journal article" date="1996" name="DNA Res.">
        <title>A 718-kb DNA sequence of the Escherichia coli K-12 genome corresponding to the 12.7-28.0 min region on the linkage map.</title>
        <authorList>
            <person name="Oshima T."/>
            <person name="Aiba H."/>
            <person name="Baba T."/>
            <person name="Fujita K."/>
            <person name="Hayashi K."/>
            <person name="Honjo A."/>
            <person name="Ikemoto K."/>
            <person name="Inada T."/>
            <person name="Itoh T."/>
            <person name="Kajihara M."/>
            <person name="Kanai K."/>
            <person name="Kashimoto K."/>
            <person name="Kimura S."/>
            <person name="Kitagawa M."/>
            <person name="Makino K."/>
            <person name="Masuda S."/>
            <person name="Miki T."/>
            <person name="Mizobuchi K."/>
            <person name="Mori H."/>
            <person name="Motomura K."/>
            <person name="Nakamura Y."/>
            <person name="Nashimoto H."/>
            <person name="Nishio Y."/>
            <person name="Saito N."/>
            <person name="Sampei G."/>
            <person name="Seki Y."/>
            <person name="Tagami H."/>
            <person name="Takemoto K."/>
            <person name="Wada C."/>
            <person name="Yamamoto Y."/>
            <person name="Yano M."/>
            <person name="Horiuchi T."/>
        </authorList>
    </citation>
    <scope>NUCLEOTIDE SEQUENCE [LARGE SCALE GENOMIC DNA]</scope>
    <source>
        <strain>K12 / W3110 / ATCC 27325 / DSM 5911</strain>
    </source>
</reference>
<reference key="3">
    <citation type="journal article" date="1997" name="Science">
        <title>The complete genome sequence of Escherichia coli K-12.</title>
        <authorList>
            <person name="Blattner F.R."/>
            <person name="Plunkett G. III"/>
            <person name="Bloch C.A."/>
            <person name="Perna N.T."/>
            <person name="Burland V."/>
            <person name="Riley M."/>
            <person name="Collado-Vides J."/>
            <person name="Glasner J.D."/>
            <person name="Rode C.K."/>
            <person name="Mayhew G.F."/>
            <person name="Gregor J."/>
            <person name="Davis N.W."/>
            <person name="Kirkpatrick H.A."/>
            <person name="Goeden M.A."/>
            <person name="Rose D.J."/>
            <person name="Mau B."/>
            <person name="Shao Y."/>
        </authorList>
    </citation>
    <scope>NUCLEOTIDE SEQUENCE [LARGE SCALE GENOMIC DNA]</scope>
    <source>
        <strain>K12 / MG1655 / ATCC 47076</strain>
    </source>
</reference>
<reference key="4">
    <citation type="journal article" date="2006" name="Mol. Syst. Biol.">
        <title>Highly accurate genome sequences of Escherichia coli K-12 strains MG1655 and W3110.</title>
        <authorList>
            <person name="Hayashi K."/>
            <person name="Morooka N."/>
            <person name="Yamamoto Y."/>
            <person name="Fujita K."/>
            <person name="Isono K."/>
            <person name="Choi S."/>
            <person name="Ohtsubo E."/>
            <person name="Baba T."/>
            <person name="Wanner B.L."/>
            <person name="Mori H."/>
            <person name="Horiuchi T."/>
        </authorList>
    </citation>
    <scope>NUCLEOTIDE SEQUENCE [LARGE SCALE GENOMIC DNA]</scope>
    <source>
        <strain>K12 / W3110 / ATCC 27325 / DSM 5911</strain>
    </source>
</reference>
<reference key="5">
    <citation type="journal article" date="2010" name="Proc. Natl. Acad. Sci. U.S.A.">
        <title>Escherichia coli condensin MukB stimulates topoisomerase IV activity by a direct physical interaction.</title>
        <authorList>
            <person name="Li Y."/>
            <person name="Stewart N.K."/>
            <person name="Berger A.J."/>
            <person name="Vos S."/>
            <person name="Schoeffler A.J."/>
            <person name="Berger J.M."/>
            <person name="Chait B.T."/>
            <person name="Oakley M.G."/>
        </authorList>
    </citation>
    <scope>PROTEIN SEQUENCE OF 162-176 AND 263-279</scope>
    <scope>INTERACTION WITH MUKB</scope>
</reference>
<reference key="6">
    <citation type="journal article" date="1996" name="Mol. Gen. Genet.">
        <title>Identification of two new genes, mukE and mukF, involved in chromosome partitioning in Escherichia coli.</title>
        <authorList>
            <person name="Yamanaka K."/>
            <person name="Ogura T."/>
            <person name="Niki H."/>
            <person name="Hiraga S."/>
        </authorList>
    </citation>
    <scope>FUNCTION</scope>
    <scope>MUTAGENESIS OF LEU-233</scope>
</reference>
<reference key="7">
    <citation type="journal article" date="1999" name="EMBO J.">
        <title>Complex formation of MukB, MukE and MukF proteins involved in chromosome partitioning in Escherichia coli.</title>
        <authorList>
            <person name="Yamazoe M."/>
            <person name="Onogi T."/>
            <person name="Sunako Y."/>
            <person name="Niki H."/>
            <person name="Yamanaka K."/>
            <person name="Ichimura T."/>
            <person name="Hiraga S."/>
        </authorList>
    </citation>
    <scope>CHARACTERIZATION</scope>
    <scope>INTERACTION WITH MUKB AND MUKE</scope>
</reference>
<keyword id="KW-0002">3D-structure</keyword>
<keyword id="KW-0106">Calcium</keyword>
<keyword id="KW-0131">Cell cycle</keyword>
<keyword id="KW-0132">Cell division</keyword>
<keyword id="KW-0159">Chromosome partition</keyword>
<keyword id="KW-0963">Cytoplasm</keyword>
<keyword id="KW-0903">Direct protein sequencing</keyword>
<keyword id="KW-0226">DNA condensation</keyword>
<keyword id="KW-1185">Reference proteome</keyword>
<comment type="function">
    <text evidence="3">Involved in chromosome condensation, segregation and cell cycle progression. May participate in facilitating chromosome segregation by condensation DNA from both sides of a centrally located replisome during cell division. Not required for mini-F plasmid partitioning. Probably acts via its interaction with MukB and MukE. Overexpression results in anucleate cells. It has a calcium binding activity.</text>
</comment>
<comment type="subunit">
    <text evidence="1 2">Interacts, and probably forms a ternary complex, with MukE and MukB via its C-terminal region. The complex formation is stimulated by calcium or magnesium. It is required for an interaction between MukE and MukB.</text>
</comment>
<comment type="interaction">
    <interactant intactId="EBI-554679">
        <id>P60293</id>
    </interactant>
    <interactant intactId="EBI-554672">
        <id>P22524</id>
        <label>mukE</label>
    </interactant>
    <organismsDiffer>false</organismsDiffer>
    <experiments>6</experiments>
</comment>
<comment type="subcellular location">
    <subcellularLocation>
        <location>Cytoplasm</location>
        <location>Nucleoid</location>
    </subcellularLocation>
    <text>Restricted to the nucleoid region.</text>
</comment>
<comment type="similarity">
    <text evidence="4">Belongs to the MukF family.</text>
</comment>
<comment type="caution">
    <text evidence="4">Was originally thought to be a killing factor. PubMed:8602138 showed that it is not involved in killing system.</text>
</comment>
<organism>
    <name type="scientific">Escherichia coli (strain K12)</name>
    <dbReference type="NCBI Taxonomy" id="83333"/>
    <lineage>
        <taxon>Bacteria</taxon>
        <taxon>Pseudomonadati</taxon>
        <taxon>Pseudomonadota</taxon>
        <taxon>Gammaproteobacteria</taxon>
        <taxon>Enterobacterales</taxon>
        <taxon>Enterobacteriaceae</taxon>
        <taxon>Escherichia</taxon>
    </lineage>
</organism>
<accession>P60293</accession>
<accession>P36567</accession>
<sequence>MSEFSQTVPELVAWARKNDFSISLPVDRLSFLLAVATLNGERLDGEMSEGELVDAFRHVSDAFEQTSETIGVRANNAINDMVRQRLLNRFTSEQAEGNAIYRLTPLGIGITDYYIRQREFSTLRLSMQLSIVAGELKRAADAAEEGGDEFHWHRNVYAPLKYSVAEIFDSIDLTQRLMDEQQQQVKDDIAQLLNKDWRAAISSCELLLSETSGTLRELQDTLEAAGDKLQANLLRIQDATMTHDDLHFVDRLVFDLQSKLDRIISWGQQSIDLWIGYDRHVHKFIRTAIDMDKNRVFAQRLRQSVQTYFDEPWALTYANADRLLDMRDEEMALRDEEVTGELPEDLEYEEFNEIREQLAAIIEEQLAVYKTRQVPLDLGLVVREYLSQYPRARHFDVARIVIDQAVRLGVAQADFTGLPAKWQPINDYGAKVQAHVIDKY</sequence>
<dbReference type="EMBL" id="D26440">
    <property type="protein sequence ID" value="BAA05457.1"/>
    <property type="molecule type" value="Genomic_DNA"/>
</dbReference>
<dbReference type="EMBL" id="U00096">
    <property type="protein sequence ID" value="AAC74008.1"/>
    <property type="molecule type" value="Genomic_DNA"/>
</dbReference>
<dbReference type="EMBL" id="AP009048">
    <property type="protein sequence ID" value="BAA35668.1"/>
    <property type="molecule type" value="Genomic_DNA"/>
</dbReference>
<dbReference type="PIR" id="S43911">
    <property type="entry name" value="S43911"/>
</dbReference>
<dbReference type="RefSeq" id="NP_415442.1">
    <property type="nucleotide sequence ID" value="NC_000913.3"/>
</dbReference>
<dbReference type="RefSeq" id="WP_001288850.1">
    <property type="nucleotide sequence ID" value="NZ_STEB01000006.1"/>
</dbReference>
<dbReference type="PDB" id="1T98">
    <property type="method" value="X-ray"/>
    <property type="resolution" value="2.90 A"/>
    <property type="chains" value="A/B=1-287"/>
</dbReference>
<dbReference type="PDB" id="3EUH">
    <property type="method" value="X-ray"/>
    <property type="resolution" value="2.90 A"/>
    <property type="chains" value="A/B=1-440"/>
</dbReference>
<dbReference type="PDB" id="3RPU">
    <property type="method" value="X-ray"/>
    <property type="resolution" value="3.60 A"/>
    <property type="chains" value="A/B/X=1-440"/>
</dbReference>
<dbReference type="PDBsum" id="1T98"/>
<dbReference type="PDBsum" id="3EUH"/>
<dbReference type="PDBsum" id="3RPU"/>
<dbReference type="SMR" id="P60293"/>
<dbReference type="BioGRID" id="4260007">
    <property type="interactions" value="249"/>
</dbReference>
<dbReference type="ComplexPortal" id="CPX-1090">
    <property type="entry name" value="MukBEF condensin complex"/>
</dbReference>
<dbReference type="DIP" id="DIP-39981N"/>
<dbReference type="FunCoup" id="P60293">
    <property type="interactions" value="98"/>
</dbReference>
<dbReference type="IntAct" id="P60293">
    <property type="interactions" value="3"/>
</dbReference>
<dbReference type="MINT" id="P60293"/>
<dbReference type="STRING" id="511145.b0922"/>
<dbReference type="jPOST" id="P60293"/>
<dbReference type="PaxDb" id="511145-b0922"/>
<dbReference type="EnsemblBacteria" id="AAC74008">
    <property type="protein sequence ID" value="AAC74008"/>
    <property type="gene ID" value="b0922"/>
</dbReference>
<dbReference type="GeneID" id="93776493"/>
<dbReference type="GeneID" id="945548"/>
<dbReference type="KEGG" id="ecj:JW0905"/>
<dbReference type="KEGG" id="eco:b0922"/>
<dbReference type="KEGG" id="ecoc:C3026_05670"/>
<dbReference type="PATRIC" id="fig|1411691.4.peg.1354"/>
<dbReference type="EchoBASE" id="EB2084"/>
<dbReference type="eggNOG" id="COG3006">
    <property type="taxonomic scope" value="Bacteria"/>
</dbReference>
<dbReference type="HOGENOM" id="CLU_049853_0_0_6"/>
<dbReference type="InParanoid" id="P60293"/>
<dbReference type="OMA" id="TKDWQAA"/>
<dbReference type="OrthoDB" id="6450805at2"/>
<dbReference type="PhylomeDB" id="P60293"/>
<dbReference type="BioCyc" id="EcoCyc:EG12165-MONOMER"/>
<dbReference type="EvolutionaryTrace" id="P60293"/>
<dbReference type="PRO" id="PR:P60293"/>
<dbReference type="Proteomes" id="UP000000625">
    <property type="component" value="Chromosome"/>
</dbReference>
<dbReference type="GO" id="GO:0000796">
    <property type="term" value="C:condensin complex"/>
    <property type="evidence" value="ECO:0000353"/>
    <property type="project" value="ComplexPortal"/>
</dbReference>
<dbReference type="GO" id="GO:0005737">
    <property type="term" value="C:cytoplasm"/>
    <property type="evidence" value="ECO:0007669"/>
    <property type="project" value="UniProtKB-UniRule"/>
</dbReference>
<dbReference type="GO" id="GO:0009295">
    <property type="term" value="C:nucleoid"/>
    <property type="evidence" value="ECO:0007669"/>
    <property type="project" value="UniProtKB-SubCell"/>
</dbReference>
<dbReference type="GO" id="GO:0005509">
    <property type="term" value="F:calcium ion binding"/>
    <property type="evidence" value="ECO:0007669"/>
    <property type="project" value="UniProtKB-UniRule"/>
</dbReference>
<dbReference type="GO" id="GO:0051301">
    <property type="term" value="P:cell division"/>
    <property type="evidence" value="ECO:0007669"/>
    <property type="project" value="UniProtKB-KW"/>
</dbReference>
<dbReference type="GO" id="GO:0030261">
    <property type="term" value="P:chromosome condensation"/>
    <property type="evidence" value="ECO:0000303"/>
    <property type="project" value="ComplexPortal"/>
</dbReference>
<dbReference type="GO" id="GO:0007059">
    <property type="term" value="P:chromosome segregation"/>
    <property type="evidence" value="ECO:0007669"/>
    <property type="project" value="UniProtKB-UniRule"/>
</dbReference>
<dbReference type="GO" id="GO:0006260">
    <property type="term" value="P:DNA replication"/>
    <property type="evidence" value="ECO:0007669"/>
    <property type="project" value="UniProtKB-UniRule"/>
</dbReference>
<dbReference type="CDD" id="cd16337">
    <property type="entry name" value="MukF_C"/>
    <property type="match status" value="1"/>
</dbReference>
<dbReference type="CDD" id="cd16335">
    <property type="entry name" value="MukF_N"/>
    <property type="match status" value="1"/>
</dbReference>
<dbReference type="Gene3D" id="1.20.58.590">
    <property type="entry name" value="Chromosome partition protein MukF, middle domain"/>
    <property type="match status" value="1"/>
</dbReference>
<dbReference type="Gene3D" id="1.10.225.40">
    <property type="entry name" value="MukF, C-terminal domain"/>
    <property type="match status" value="1"/>
</dbReference>
<dbReference type="Gene3D" id="1.10.10.10">
    <property type="entry name" value="Winged helix-like DNA-binding domain superfamily/Winged helix DNA-binding domain"/>
    <property type="match status" value="1"/>
</dbReference>
<dbReference type="HAMAP" id="MF_01803">
    <property type="entry name" value="MukF"/>
    <property type="match status" value="1"/>
</dbReference>
<dbReference type="InterPro" id="IPR005582">
    <property type="entry name" value="Chromosome_partition_MukF"/>
</dbReference>
<dbReference type="InterPro" id="IPR033441">
    <property type="entry name" value="MukF_C"/>
</dbReference>
<dbReference type="InterPro" id="IPR038198">
    <property type="entry name" value="MukF_C_sf"/>
</dbReference>
<dbReference type="InterPro" id="IPR033440">
    <property type="entry name" value="MukF_M"/>
</dbReference>
<dbReference type="InterPro" id="IPR036141">
    <property type="entry name" value="MukF_M_sp"/>
</dbReference>
<dbReference type="InterPro" id="IPR033439">
    <property type="entry name" value="MukF_WHTH"/>
</dbReference>
<dbReference type="InterPro" id="IPR036388">
    <property type="entry name" value="WH-like_DNA-bd_sf"/>
</dbReference>
<dbReference type="InterPro" id="IPR036390">
    <property type="entry name" value="WH_DNA-bd_sf"/>
</dbReference>
<dbReference type="NCBIfam" id="NF003615">
    <property type="entry name" value="PRK05260.1"/>
    <property type="match status" value="1"/>
</dbReference>
<dbReference type="Pfam" id="PF03882">
    <property type="entry name" value="KicB"/>
    <property type="match status" value="1"/>
</dbReference>
<dbReference type="Pfam" id="PF17193">
    <property type="entry name" value="MukF_C"/>
    <property type="match status" value="1"/>
</dbReference>
<dbReference type="Pfam" id="PF17192">
    <property type="entry name" value="MukF_M"/>
    <property type="match status" value="1"/>
</dbReference>
<dbReference type="PIRSF" id="PIRSF018282">
    <property type="entry name" value="MukF"/>
    <property type="match status" value="1"/>
</dbReference>
<dbReference type="SUPFAM" id="SSF140570">
    <property type="entry name" value="MukF C-terminal domain-like"/>
    <property type="match status" value="1"/>
</dbReference>
<dbReference type="SUPFAM" id="SSF46785">
    <property type="entry name" value="Winged helix' DNA-binding domain"/>
    <property type="match status" value="1"/>
</dbReference>
<name>MUKF_ECOLI</name>
<evidence type="ECO:0000269" key="1">
    <source>
    </source>
</evidence>
<evidence type="ECO:0000269" key="2">
    <source>
    </source>
</evidence>
<evidence type="ECO:0000269" key="3">
    <source>
    </source>
</evidence>
<evidence type="ECO:0000305" key="4"/>
<evidence type="ECO:0007829" key="5">
    <source>
        <dbReference type="PDB" id="1T98"/>
    </source>
</evidence>
<evidence type="ECO:0007829" key="6">
    <source>
        <dbReference type="PDB" id="3EUH"/>
    </source>
</evidence>
<gene>
    <name type="primary">mukF</name>
    <name type="synonym">kicB</name>
    <name type="ordered locus">b0922</name>
    <name type="ordered locus">JW0905</name>
</gene>
<protein>
    <recommendedName>
        <fullName>Chromosome partition protein MukF</fullName>
    </recommendedName>
    <alternativeName>
        <fullName>Protein KicB</fullName>
    </alternativeName>
</protein>
<proteinExistence type="evidence at protein level"/>